<sequence>SDRASDGRNAAANDRASDLVALTVRGCCTYPPCAVLSPLCD</sequence>
<comment type="subcellular location">
    <subcellularLocation>
        <location evidence="4">Secreted</location>
    </subcellularLocation>
</comment>
<comment type="tissue specificity">
    <text evidence="4">Expressed by the venom duct.</text>
</comment>
<comment type="domain">
    <text evidence="3">The cysteine framework is I (CC-C-C). Alpha4/6 pattern.</text>
</comment>
<comment type="similarity">
    <text evidence="3">Belongs to the conotoxin A superfamily.</text>
</comment>
<dbReference type="GO" id="GO:0005576">
    <property type="term" value="C:extracellular region"/>
    <property type="evidence" value="ECO:0007669"/>
    <property type="project" value="UniProtKB-SubCell"/>
</dbReference>
<dbReference type="GO" id="GO:0030550">
    <property type="term" value="F:acetylcholine receptor inhibitor activity"/>
    <property type="evidence" value="ECO:0007669"/>
    <property type="project" value="InterPro"/>
</dbReference>
<dbReference type="GO" id="GO:0099106">
    <property type="term" value="F:ion channel regulator activity"/>
    <property type="evidence" value="ECO:0007669"/>
    <property type="project" value="UniProtKB-KW"/>
</dbReference>
<dbReference type="GO" id="GO:0090729">
    <property type="term" value="F:toxin activity"/>
    <property type="evidence" value="ECO:0007669"/>
    <property type="project" value="UniProtKB-KW"/>
</dbReference>
<dbReference type="InterPro" id="IPR009958">
    <property type="entry name" value="Conotoxin_a-typ"/>
</dbReference>
<dbReference type="Pfam" id="PF07365">
    <property type="entry name" value="Toxin_8"/>
    <property type="match status" value="1"/>
</dbReference>
<organism>
    <name type="scientific">Conus bullatus</name>
    <name type="common">Bubble cone</name>
    <dbReference type="NCBI Taxonomy" id="89438"/>
    <lineage>
        <taxon>Eukaryota</taxon>
        <taxon>Metazoa</taxon>
        <taxon>Spiralia</taxon>
        <taxon>Lophotrochozoa</taxon>
        <taxon>Mollusca</taxon>
        <taxon>Gastropoda</taxon>
        <taxon>Caenogastropoda</taxon>
        <taxon>Neogastropoda</taxon>
        <taxon>Conoidea</taxon>
        <taxon>Conidae</taxon>
        <taxon>Conus</taxon>
        <taxon>Textilia</taxon>
    </lineage>
</organism>
<keyword id="KW-1015">Disulfide bond</keyword>
<keyword id="KW-0872">Ion channel impairing toxin</keyword>
<keyword id="KW-0528">Neurotoxin</keyword>
<keyword id="KW-0964">Secreted</keyword>
<keyword id="KW-0800">Toxin</keyword>
<proteinExistence type="evidence at transcript level"/>
<reference key="1">
    <citation type="journal article" date="2011" name="BMC Genomics">
        <title>Characterization of the Conus bullatus genome and its venom-duct transcriptome.</title>
        <authorList>
            <person name="Hu H."/>
            <person name="Bandyopadhyay P.K."/>
            <person name="Olivera B.M."/>
            <person name="Yandell M."/>
        </authorList>
    </citation>
    <scope>NUCLEOTIDE SEQUENCE [MRNA]</scope>
    <source>
        <tissue>Venom duct</tissue>
    </source>
</reference>
<evidence type="ECO:0000250" key="1"/>
<evidence type="ECO:0000250" key="2">
    <source>
        <dbReference type="UniProtKB" id="K8DWB5"/>
    </source>
</evidence>
<evidence type="ECO:0000305" key="3"/>
<evidence type="ECO:0000305" key="4">
    <source>
    </source>
</evidence>
<feature type="propeptide" id="PRO_0000409969" evidence="1">
    <location>
        <begin position="1" status="less than"/>
        <end position="25"/>
    </location>
</feature>
<feature type="peptide" id="PRO_0000409970" description="Conotoxin Bu22">
    <location>
        <begin position="26"/>
        <end position="41"/>
    </location>
</feature>
<feature type="disulfide bond" evidence="2">
    <location>
        <begin position="27"/>
        <end position="33"/>
    </location>
</feature>
<feature type="disulfide bond" evidence="2">
    <location>
        <begin position="28"/>
        <end position="40"/>
    </location>
</feature>
<feature type="non-terminal residue">
    <location>
        <position position="1"/>
    </location>
</feature>
<protein>
    <recommendedName>
        <fullName>Conotoxin Bu22</fullName>
    </recommendedName>
</protein>
<name>CA122_CONBU</name>
<accession>P0CY77</accession>